<name>THIM_GLAP5</name>
<proteinExistence type="inferred from homology"/>
<feature type="chain" id="PRO_0000383865" description="Hydroxyethylthiazole kinase">
    <location>
        <begin position="1"/>
        <end position="269"/>
    </location>
</feature>
<feature type="binding site" evidence="1">
    <location>
        <position position="43"/>
    </location>
    <ligand>
        <name>substrate</name>
    </ligand>
</feature>
<feature type="binding site" evidence="1">
    <location>
        <position position="119"/>
    </location>
    <ligand>
        <name>ATP</name>
        <dbReference type="ChEBI" id="CHEBI:30616"/>
    </ligand>
</feature>
<feature type="binding site" evidence="1">
    <location>
        <position position="165"/>
    </location>
    <ligand>
        <name>ATP</name>
        <dbReference type="ChEBI" id="CHEBI:30616"/>
    </ligand>
</feature>
<feature type="binding site" evidence="1">
    <location>
        <position position="192"/>
    </location>
    <ligand>
        <name>substrate</name>
    </ligand>
</feature>
<organism>
    <name type="scientific">Glaesserella parasuis serovar 5 (strain SH0165)</name>
    <name type="common">Haemophilus parasuis</name>
    <dbReference type="NCBI Taxonomy" id="557723"/>
    <lineage>
        <taxon>Bacteria</taxon>
        <taxon>Pseudomonadati</taxon>
        <taxon>Pseudomonadota</taxon>
        <taxon>Gammaproteobacteria</taxon>
        <taxon>Pasteurellales</taxon>
        <taxon>Pasteurellaceae</taxon>
        <taxon>Glaesserella</taxon>
    </lineage>
</organism>
<comment type="function">
    <text evidence="1">Catalyzes the phosphorylation of the hydroxyl group of 4-methyl-5-beta-hydroxyethylthiazole (THZ).</text>
</comment>
<comment type="catalytic activity">
    <reaction evidence="1">
        <text>5-(2-hydroxyethyl)-4-methylthiazole + ATP = 4-methyl-5-(2-phosphooxyethyl)-thiazole + ADP + H(+)</text>
        <dbReference type="Rhea" id="RHEA:24212"/>
        <dbReference type="ChEBI" id="CHEBI:15378"/>
        <dbReference type="ChEBI" id="CHEBI:17957"/>
        <dbReference type="ChEBI" id="CHEBI:30616"/>
        <dbReference type="ChEBI" id="CHEBI:58296"/>
        <dbReference type="ChEBI" id="CHEBI:456216"/>
        <dbReference type="EC" id="2.7.1.50"/>
    </reaction>
</comment>
<comment type="cofactor">
    <cofactor evidence="1">
        <name>Mg(2+)</name>
        <dbReference type="ChEBI" id="CHEBI:18420"/>
    </cofactor>
</comment>
<comment type="pathway">
    <text evidence="1">Cofactor biosynthesis; thiamine diphosphate biosynthesis; 4-methyl-5-(2-phosphoethyl)-thiazole from 5-(2-hydroxyethyl)-4-methylthiazole: step 1/1.</text>
</comment>
<comment type="similarity">
    <text evidence="1">Belongs to the Thz kinase family.</text>
</comment>
<gene>
    <name evidence="1" type="primary">thiM</name>
    <name type="ordered locus">HAPS_1841</name>
</gene>
<protein>
    <recommendedName>
        <fullName evidence="1">Hydroxyethylthiazole kinase</fullName>
        <ecNumber evidence="1">2.7.1.50</ecNumber>
    </recommendedName>
    <alternativeName>
        <fullName evidence="1">4-methyl-5-beta-hydroxyethylthiazole kinase</fullName>
        <shortName evidence="1">TH kinase</shortName>
        <shortName evidence="1">Thz kinase</shortName>
    </alternativeName>
</protein>
<sequence length="269" mass="27856">MNPKIIFLDAVREHNPLIHNITNLVSAHFTANGLLALGASPMMAESPDEMAELATISSAVVLNLGTPSDEKVSAMLAAGMAANQAGVPVVLDPVAVGASHLRQKTVATLTQNIQFAAIRGNAGELAYLADVQWASKGVDAGQGSGNLAEIAQKVAQKFNTIAVLSGEHDFVANHDRVMKLSNGVALFPKVTATGCLLSAIVGAFLAVAPRELAFQAACEACTVYAIAGELAAVGLQATQSGTFAVRLLDALAAIDATQTEQLMKAEWII</sequence>
<accession>B8F7P4</accession>
<reference key="1">
    <citation type="journal article" date="2009" name="J. Bacteriol.">
        <title>Complete genome sequence of Haemophilus parasuis SH0165.</title>
        <authorList>
            <person name="Yue M."/>
            <person name="Yang F."/>
            <person name="Yang J."/>
            <person name="Bei W."/>
            <person name="Cai X."/>
            <person name="Chen L."/>
            <person name="Dong J."/>
            <person name="Zhou R."/>
            <person name="Jin M."/>
            <person name="Jin Q."/>
            <person name="Chen H."/>
        </authorList>
    </citation>
    <scope>NUCLEOTIDE SEQUENCE [LARGE SCALE GENOMIC DNA]</scope>
    <source>
        <strain>SH0165</strain>
    </source>
</reference>
<evidence type="ECO:0000255" key="1">
    <source>
        <dbReference type="HAMAP-Rule" id="MF_00228"/>
    </source>
</evidence>
<dbReference type="EC" id="2.7.1.50" evidence="1"/>
<dbReference type="EMBL" id="CP001321">
    <property type="protein sequence ID" value="ACL33346.1"/>
    <property type="molecule type" value="Genomic_DNA"/>
</dbReference>
<dbReference type="RefSeq" id="WP_010787317.1">
    <property type="nucleotide sequence ID" value="NC_011852.1"/>
</dbReference>
<dbReference type="SMR" id="B8F7P4"/>
<dbReference type="STRING" id="557723.HAPS_1841"/>
<dbReference type="GeneID" id="66619933"/>
<dbReference type="KEGG" id="hap:HAPS_1841"/>
<dbReference type="HOGENOM" id="CLU_019943_0_0_6"/>
<dbReference type="UniPathway" id="UPA00060">
    <property type="reaction ID" value="UER00139"/>
</dbReference>
<dbReference type="Proteomes" id="UP000006743">
    <property type="component" value="Chromosome"/>
</dbReference>
<dbReference type="GO" id="GO:0005524">
    <property type="term" value="F:ATP binding"/>
    <property type="evidence" value="ECO:0007669"/>
    <property type="project" value="UniProtKB-UniRule"/>
</dbReference>
<dbReference type="GO" id="GO:0004417">
    <property type="term" value="F:hydroxyethylthiazole kinase activity"/>
    <property type="evidence" value="ECO:0007669"/>
    <property type="project" value="UniProtKB-UniRule"/>
</dbReference>
<dbReference type="GO" id="GO:0000287">
    <property type="term" value="F:magnesium ion binding"/>
    <property type="evidence" value="ECO:0007669"/>
    <property type="project" value="UniProtKB-UniRule"/>
</dbReference>
<dbReference type="GO" id="GO:0009228">
    <property type="term" value="P:thiamine biosynthetic process"/>
    <property type="evidence" value="ECO:0007669"/>
    <property type="project" value="UniProtKB-KW"/>
</dbReference>
<dbReference type="GO" id="GO:0009229">
    <property type="term" value="P:thiamine diphosphate biosynthetic process"/>
    <property type="evidence" value="ECO:0007669"/>
    <property type="project" value="UniProtKB-UniRule"/>
</dbReference>
<dbReference type="CDD" id="cd01170">
    <property type="entry name" value="THZ_kinase"/>
    <property type="match status" value="1"/>
</dbReference>
<dbReference type="Gene3D" id="3.40.1190.20">
    <property type="match status" value="1"/>
</dbReference>
<dbReference type="HAMAP" id="MF_00228">
    <property type="entry name" value="Thz_kinase"/>
    <property type="match status" value="1"/>
</dbReference>
<dbReference type="InterPro" id="IPR000417">
    <property type="entry name" value="Hyethyz_kinase"/>
</dbReference>
<dbReference type="InterPro" id="IPR029056">
    <property type="entry name" value="Ribokinase-like"/>
</dbReference>
<dbReference type="NCBIfam" id="NF006830">
    <property type="entry name" value="PRK09355.1"/>
    <property type="match status" value="1"/>
</dbReference>
<dbReference type="NCBIfam" id="TIGR00694">
    <property type="entry name" value="thiM"/>
    <property type="match status" value="1"/>
</dbReference>
<dbReference type="Pfam" id="PF02110">
    <property type="entry name" value="HK"/>
    <property type="match status" value="1"/>
</dbReference>
<dbReference type="PIRSF" id="PIRSF000513">
    <property type="entry name" value="Thz_kinase"/>
    <property type="match status" value="1"/>
</dbReference>
<dbReference type="PRINTS" id="PR01099">
    <property type="entry name" value="HYETHTZKNASE"/>
</dbReference>
<dbReference type="SUPFAM" id="SSF53613">
    <property type="entry name" value="Ribokinase-like"/>
    <property type="match status" value="1"/>
</dbReference>
<keyword id="KW-0067">ATP-binding</keyword>
<keyword id="KW-0418">Kinase</keyword>
<keyword id="KW-0460">Magnesium</keyword>
<keyword id="KW-0479">Metal-binding</keyword>
<keyword id="KW-0547">Nucleotide-binding</keyword>
<keyword id="KW-1185">Reference proteome</keyword>
<keyword id="KW-0784">Thiamine biosynthesis</keyword>
<keyword id="KW-0808">Transferase</keyword>